<gene>
    <name evidence="4" type="primary">KMS2</name>
    <name evidence="6" type="ordered locus">At1g05360</name>
    <name evidence="7" type="ORF">YUP8H12.2</name>
</gene>
<proteinExistence type="evidence at protein level"/>
<name>KMS2_ARATH</name>
<keyword id="KW-0007">Acetylation</keyword>
<keyword id="KW-0256">Endoplasmic reticulum</keyword>
<keyword id="KW-0931">ER-Golgi transport</keyword>
<keyword id="KW-0472">Membrane</keyword>
<keyword id="KW-1185">Reference proteome</keyword>
<keyword id="KW-0812">Transmembrane</keyword>
<keyword id="KW-1133">Transmembrane helix</keyword>
<keyword id="KW-0813">Transport</keyword>
<dbReference type="EMBL" id="AC000098">
    <property type="protein sequence ID" value="AAB71442.1"/>
    <property type="status" value="ALT_SEQ"/>
    <property type="molecule type" value="Genomic_DNA"/>
</dbReference>
<dbReference type="EMBL" id="CP002684">
    <property type="protein sequence ID" value="AEE27829.1"/>
    <property type="molecule type" value="Genomic_DNA"/>
</dbReference>
<dbReference type="EMBL" id="AY084410">
    <property type="protein sequence ID" value="AAM60984.1"/>
    <property type="molecule type" value="mRNA"/>
</dbReference>
<dbReference type="EMBL" id="AK227587">
    <property type="protein sequence ID" value="BAE99580.1"/>
    <property type="molecule type" value="mRNA"/>
</dbReference>
<dbReference type="PIR" id="E86188">
    <property type="entry name" value="E86188"/>
</dbReference>
<dbReference type="RefSeq" id="NP_563735.1">
    <property type="nucleotide sequence ID" value="NM_100415.5"/>
</dbReference>
<dbReference type="FunCoup" id="F4I8Q7">
    <property type="interactions" value="2207"/>
</dbReference>
<dbReference type="STRING" id="3702.F4I8Q7"/>
<dbReference type="PaxDb" id="3702-AT1G05360.1"/>
<dbReference type="ProteomicsDB" id="230317"/>
<dbReference type="EnsemblPlants" id="AT1G05360.1">
    <property type="protein sequence ID" value="AT1G05360.1"/>
    <property type="gene ID" value="AT1G05360"/>
</dbReference>
<dbReference type="GeneID" id="837035"/>
<dbReference type="Gramene" id="AT1G05360.1">
    <property type="protein sequence ID" value="AT1G05360.1"/>
    <property type="gene ID" value="AT1G05360"/>
</dbReference>
<dbReference type="KEGG" id="ath:AT1G05360"/>
<dbReference type="Araport" id="AT1G05360"/>
<dbReference type="TAIR" id="AT1G05360">
    <property type="gene designation" value="KMS2"/>
</dbReference>
<dbReference type="eggNOG" id="KOG1109">
    <property type="taxonomic scope" value="Eukaryota"/>
</dbReference>
<dbReference type="HOGENOM" id="CLU_033298_0_1_1"/>
<dbReference type="InParanoid" id="F4I8Q7"/>
<dbReference type="OMA" id="RKIEPME"/>
<dbReference type="PRO" id="PR:F4I8Q7"/>
<dbReference type="Proteomes" id="UP000006548">
    <property type="component" value="Chromosome 1"/>
</dbReference>
<dbReference type="ExpressionAtlas" id="F4I8Q7">
    <property type="expression patterns" value="baseline and differential"/>
</dbReference>
<dbReference type="GO" id="GO:0005783">
    <property type="term" value="C:endoplasmic reticulum"/>
    <property type="evidence" value="ECO:0000314"/>
    <property type="project" value="TAIR"/>
</dbReference>
<dbReference type="GO" id="GO:0005789">
    <property type="term" value="C:endoplasmic reticulum membrane"/>
    <property type="evidence" value="ECO:0000314"/>
    <property type="project" value="UniProtKB"/>
</dbReference>
<dbReference type="GO" id="GO:0010256">
    <property type="term" value="P:endomembrane system organization"/>
    <property type="evidence" value="ECO:0000315"/>
    <property type="project" value="UniProtKB"/>
</dbReference>
<dbReference type="GO" id="GO:0016192">
    <property type="term" value="P:vesicle-mediated transport"/>
    <property type="evidence" value="ECO:0000315"/>
    <property type="project" value="UniProtKB"/>
</dbReference>
<organism>
    <name type="scientific">Arabidopsis thaliana</name>
    <name type="common">Mouse-ear cress</name>
    <dbReference type="NCBI Taxonomy" id="3702"/>
    <lineage>
        <taxon>Eukaryota</taxon>
        <taxon>Viridiplantae</taxon>
        <taxon>Streptophyta</taxon>
        <taxon>Embryophyta</taxon>
        <taxon>Tracheophyta</taxon>
        <taxon>Spermatophyta</taxon>
        <taxon>Magnoliopsida</taxon>
        <taxon>eudicotyledons</taxon>
        <taxon>Gunneridae</taxon>
        <taxon>Pentapetalae</taxon>
        <taxon>rosids</taxon>
        <taxon>malvids</taxon>
        <taxon>Brassicales</taxon>
        <taxon>Brassicaceae</taxon>
        <taxon>Camelineae</taxon>
        <taxon>Arabidopsis</taxon>
    </lineage>
</organism>
<feature type="initiator methionine" description="Removed" evidence="1">
    <location>
        <position position="1"/>
    </location>
</feature>
<feature type="chain" id="PRO_0000430959" description="Vacuole membrane protein KMS2">
    <location>
        <begin position="2"/>
        <end position="416"/>
    </location>
</feature>
<feature type="topological domain" description="Cytoplasmic" evidence="1">
    <location>
        <begin position="2"/>
        <end position="59"/>
    </location>
</feature>
<feature type="transmembrane region" description="Helical; Name=1" evidence="2">
    <location>
        <begin position="60"/>
        <end position="80"/>
    </location>
</feature>
<feature type="topological domain" description="Lumenal" evidence="4">
    <location>
        <begin position="81"/>
        <end position="100"/>
    </location>
</feature>
<feature type="transmembrane region" description="Helical; Name=2" evidence="2">
    <location>
        <begin position="101"/>
        <end position="123"/>
    </location>
</feature>
<feature type="topological domain" description="Cytoplasmic" evidence="4">
    <location>
        <begin position="124"/>
        <end position="249"/>
    </location>
</feature>
<feature type="transmembrane region" description="Helical; Name=3" evidence="2">
    <location>
        <begin position="250"/>
        <end position="270"/>
    </location>
</feature>
<feature type="topological domain" description="Lumenal" evidence="4">
    <location>
        <begin position="271"/>
        <end position="281"/>
    </location>
</feature>
<feature type="transmembrane region" description="Helical; Name=4" evidence="2">
    <location>
        <begin position="282"/>
        <end position="304"/>
    </location>
</feature>
<feature type="topological domain" description="Cytoplasmic" evidence="4">
    <location>
        <begin position="305"/>
        <end position="315"/>
    </location>
</feature>
<feature type="transmembrane region" description="Helical; Name=5" evidence="2">
    <location>
        <begin position="316"/>
        <end position="336"/>
    </location>
</feature>
<feature type="topological domain" description="Lumenal" evidence="4">
    <location>
        <begin position="337"/>
        <end position="364"/>
    </location>
</feature>
<feature type="transmembrane region" description="Helical; Name=6" evidence="2">
    <location>
        <begin position="365"/>
        <end position="385"/>
    </location>
</feature>
<feature type="topological domain" description="Cytoplasmic" evidence="1">
    <location>
        <begin position="386"/>
        <end position="416"/>
    </location>
</feature>
<feature type="modified residue" description="N-acetylglycine" evidence="1">
    <location>
        <position position="2"/>
    </location>
</feature>
<feature type="sequence conflict" description="In Ref. 3; AAM60984." ref="3">
    <original>V</original>
    <variation>A</variation>
    <location>
        <position position="134"/>
    </location>
</feature>
<feature type="sequence conflict" description="In Ref. 3; AAM60984." ref="3">
    <original>I</original>
    <variation>V</variation>
    <location>
        <position position="146"/>
    </location>
</feature>
<feature type="sequence conflict" description="In Ref. 4; BAE99580." ref="4">
    <original>K</original>
    <variation>R</variation>
    <location>
        <position position="217"/>
    </location>
</feature>
<feature type="sequence conflict" description="In Ref. 3; AAM60984." ref="3">
    <original>K</original>
    <variation>I</variation>
    <location>
        <position position="232"/>
    </location>
</feature>
<feature type="sequence conflict" description="In Ref. 3; AAM60984." ref="3">
    <original>T</original>
    <variation>S</variation>
    <location>
        <position position="411"/>
    </location>
</feature>
<evidence type="ECO:0000250" key="1">
    <source>
        <dbReference type="UniProtKB" id="Q5XF36"/>
    </source>
</evidence>
<evidence type="ECO:0000255" key="2"/>
<evidence type="ECO:0000269" key="3">
    <source>
    </source>
</evidence>
<evidence type="ECO:0000303" key="4">
    <source>
    </source>
</evidence>
<evidence type="ECO:0000305" key="5"/>
<evidence type="ECO:0000312" key="6">
    <source>
        <dbReference type="Araport" id="AT1G05360"/>
    </source>
</evidence>
<evidence type="ECO:0000312" key="7">
    <source>
        <dbReference type="EMBL" id="AAB71442.1"/>
    </source>
</evidence>
<accession>F4I8Q7</accession>
<accession>O23033</accession>
<accession>Q0WTG8</accession>
<accession>Q8LG86</accession>
<protein>
    <recommendedName>
        <fullName evidence="4">Vacuole membrane protein KMS2</fullName>
    </recommendedName>
    <alternativeName>
        <fullName evidence="4">Protein KILLING ME SLOWLY 2</fullName>
    </alternativeName>
</protein>
<sequence length="416" mass="46619">MGYGNRASSKTPAISGLREKHQQDLEKLTLTSQPFKTLRLFVVAVFLYVRRWSSYLLANVGWLILFCSIFVAFAALLVTLDGPHVKHVEELSEYTRFGLWWIFLGVASSIGLGSGLHTFVLYLGPHIALFTIKVMQCGRVDLKSAIYDTIQLKRSPSWLDKPCHEFGSPVFSSGVPLSSILPQVQIEAILWGLGTALGELPPYFISRAASLSGGKMKELETCSGDDNGFIAKRVNQIKSWLLSHSQYLNFFTILILASVPNPLFDLAGIMCGQFEKPFWEFFLATLIGKAIIKTHIQTVFIICVCNNQLLDWVENELIYILSFVPGFASALPELTAKLRLMKEKYLIASPPVSSDINVKKWDLSFASVWNGVVWLMLLNFFGQIVTSTAQRYLKKQQEEELDALTNKSSLTSKKSK</sequence>
<comment type="function">
    <text evidence="3">Involved in the early secretory pathway. Required for the correct export of secretory products from the endoplasmic reticulum (ER) and involved in the maintenance of ER integrity.</text>
</comment>
<comment type="subcellular location">
    <subcellularLocation>
        <location evidence="3">Endoplasmic reticulum membrane</location>
        <topology evidence="4">Multi-pass membrane protein</topology>
    </subcellularLocation>
</comment>
<comment type="similarity">
    <text evidence="5">Belongs to the VMP1 family.</text>
</comment>
<comment type="sequence caution" evidence="5">
    <conflict type="erroneous gene model prediction">
        <sequence resource="EMBL-CDS" id="AAB71442"/>
    </conflict>
</comment>
<reference key="1">
    <citation type="journal article" date="2000" name="Nature">
        <title>Sequence and analysis of chromosome 1 of the plant Arabidopsis thaliana.</title>
        <authorList>
            <person name="Theologis A."/>
            <person name="Ecker J.R."/>
            <person name="Palm C.J."/>
            <person name="Federspiel N.A."/>
            <person name="Kaul S."/>
            <person name="White O."/>
            <person name="Alonso J."/>
            <person name="Altafi H."/>
            <person name="Araujo R."/>
            <person name="Bowman C.L."/>
            <person name="Brooks S.Y."/>
            <person name="Buehler E."/>
            <person name="Chan A."/>
            <person name="Chao Q."/>
            <person name="Chen H."/>
            <person name="Cheuk R.F."/>
            <person name="Chin C.W."/>
            <person name="Chung M.K."/>
            <person name="Conn L."/>
            <person name="Conway A.B."/>
            <person name="Conway A.R."/>
            <person name="Creasy T.H."/>
            <person name="Dewar K."/>
            <person name="Dunn P."/>
            <person name="Etgu P."/>
            <person name="Feldblyum T.V."/>
            <person name="Feng J.-D."/>
            <person name="Fong B."/>
            <person name="Fujii C.Y."/>
            <person name="Gill J.E."/>
            <person name="Goldsmith A.D."/>
            <person name="Haas B."/>
            <person name="Hansen N.F."/>
            <person name="Hughes B."/>
            <person name="Huizar L."/>
            <person name="Hunter J.L."/>
            <person name="Jenkins J."/>
            <person name="Johnson-Hopson C."/>
            <person name="Khan S."/>
            <person name="Khaykin E."/>
            <person name="Kim C.J."/>
            <person name="Koo H.L."/>
            <person name="Kremenetskaia I."/>
            <person name="Kurtz D.B."/>
            <person name="Kwan A."/>
            <person name="Lam B."/>
            <person name="Langin-Hooper S."/>
            <person name="Lee A."/>
            <person name="Lee J.M."/>
            <person name="Lenz C.A."/>
            <person name="Li J.H."/>
            <person name="Li Y.-P."/>
            <person name="Lin X."/>
            <person name="Liu S.X."/>
            <person name="Liu Z.A."/>
            <person name="Luros J.S."/>
            <person name="Maiti R."/>
            <person name="Marziali A."/>
            <person name="Militscher J."/>
            <person name="Miranda M."/>
            <person name="Nguyen M."/>
            <person name="Nierman W.C."/>
            <person name="Osborne B.I."/>
            <person name="Pai G."/>
            <person name="Peterson J."/>
            <person name="Pham P.K."/>
            <person name="Rizzo M."/>
            <person name="Rooney T."/>
            <person name="Rowley D."/>
            <person name="Sakano H."/>
            <person name="Salzberg S.L."/>
            <person name="Schwartz J.R."/>
            <person name="Shinn P."/>
            <person name="Southwick A.M."/>
            <person name="Sun H."/>
            <person name="Tallon L.J."/>
            <person name="Tambunga G."/>
            <person name="Toriumi M.J."/>
            <person name="Town C.D."/>
            <person name="Utterback T."/>
            <person name="Van Aken S."/>
            <person name="Vaysberg M."/>
            <person name="Vysotskaia V.S."/>
            <person name="Walker M."/>
            <person name="Wu D."/>
            <person name="Yu G."/>
            <person name="Fraser C.M."/>
            <person name="Venter J.C."/>
            <person name="Davis R.W."/>
        </authorList>
    </citation>
    <scope>NUCLEOTIDE SEQUENCE [LARGE SCALE GENOMIC DNA]</scope>
    <source>
        <strain>cv. Columbia</strain>
    </source>
</reference>
<reference key="2">
    <citation type="journal article" date="2017" name="Plant J.">
        <title>Araport11: a complete reannotation of the Arabidopsis thaliana reference genome.</title>
        <authorList>
            <person name="Cheng C.Y."/>
            <person name="Krishnakumar V."/>
            <person name="Chan A.P."/>
            <person name="Thibaud-Nissen F."/>
            <person name="Schobel S."/>
            <person name="Town C.D."/>
        </authorList>
    </citation>
    <scope>GENOME REANNOTATION</scope>
    <source>
        <strain>cv. Columbia</strain>
    </source>
</reference>
<reference key="3">
    <citation type="submission" date="2002-03" db="EMBL/GenBank/DDBJ databases">
        <title>Full-length cDNA from Arabidopsis thaliana.</title>
        <authorList>
            <person name="Brover V.V."/>
            <person name="Troukhan M.E."/>
            <person name="Alexandrov N.A."/>
            <person name="Lu Y.-P."/>
            <person name="Flavell R.B."/>
            <person name="Feldmann K.A."/>
        </authorList>
    </citation>
    <scope>NUCLEOTIDE SEQUENCE [LARGE SCALE MRNA]</scope>
</reference>
<reference key="4">
    <citation type="submission" date="2006-07" db="EMBL/GenBank/DDBJ databases">
        <title>Large-scale analysis of RIKEN Arabidopsis full-length (RAFL) cDNAs.</title>
        <authorList>
            <person name="Totoki Y."/>
            <person name="Seki M."/>
            <person name="Ishida J."/>
            <person name="Nakajima M."/>
            <person name="Enju A."/>
            <person name="Kamiya A."/>
            <person name="Narusaka M."/>
            <person name="Shin-i T."/>
            <person name="Nakagawa M."/>
            <person name="Sakamoto N."/>
            <person name="Oishi K."/>
            <person name="Kohara Y."/>
            <person name="Kobayashi M."/>
            <person name="Toyoda A."/>
            <person name="Sakaki Y."/>
            <person name="Sakurai T."/>
            <person name="Iida K."/>
            <person name="Akiyama K."/>
            <person name="Satou M."/>
            <person name="Toyoda T."/>
            <person name="Konagaya A."/>
            <person name="Carninci P."/>
            <person name="Kawai J."/>
            <person name="Hayashizaki Y."/>
            <person name="Shinozaki K."/>
        </authorList>
    </citation>
    <scope>NUCLEOTIDE SEQUENCE [LARGE SCALE MRNA] OF 45-416</scope>
    <source>
        <strain>cv. Columbia</strain>
    </source>
</reference>
<reference key="5">
    <citation type="journal article" date="2011" name="Plant J.">
        <title>KMS1 and KMS2, two plant endoplasmic reticulum proteins involved in the early secretory pathway.</title>
        <authorList>
            <person name="Wang P."/>
            <person name="Hummel E."/>
            <person name="Osterrieder A."/>
            <person name="Meyer A.J."/>
            <person name="Frigerio L."/>
            <person name="Sparkes I."/>
            <person name="Hawes C."/>
        </authorList>
    </citation>
    <scope>FUNCTION</scope>
    <scope>SUBCELLULAR LOCATION</scope>
    <scope>TOPOLOGY</scope>
</reference>